<keyword id="KW-0131">Cell cycle</keyword>
<keyword id="KW-0132">Cell division</keyword>
<keyword id="KW-0342">GTP-binding</keyword>
<keyword id="KW-0460">Magnesium</keyword>
<keyword id="KW-0479">Metal-binding</keyword>
<keyword id="KW-0547">Nucleotide-binding</keyword>
<keyword id="KW-1185">Reference proteome</keyword>
<keyword id="KW-0717">Septation</keyword>
<accession>P64068</accession>
<accession>Q8XFI8</accession>
<sequence>MTNLNYQQTHFVMSAPDIRHLPSDCGIEVAFAGRSNAGKSSALNTLTNQKSLARTSKTPGRTQLINLFEVVDGKRLVDLPGYGYAEVPEEMKRKWQRALGEYLEKRQSLQGLVVLMDIRHPLKDLDQQMIQWAVESNIQVLVLLTKADKLASGARKAQLNMVREAVLAFNGDVQVEAFSSLKKQGVDKLRQKLDSWFSELAPVEEIQDGE</sequence>
<dbReference type="EMBL" id="AE006468">
    <property type="protein sequence ID" value="AAL22840.1"/>
    <property type="molecule type" value="Genomic_DNA"/>
</dbReference>
<dbReference type="SMR" id="P64068"/>
<dbReference type="STRING" id="99287.STM4001"/>
<dbReference type="PaxDb" id="99287-STM4001"/>
<dbReference type="KEGG" id="stm:STM4001"/>
<dbReference type="PATRIC" id="fig|99287.12.peg.4215"/>
<dbReference type="HOGENOM" id="CLU_033732_1_0_6"/>
<dbReference type="OMA" id="AKVDQCP"/>
<dbReference type="PhylomeDB" id="P64068"/>
<dbReference type="BioCyc" id="SENT99287:STM4001-MONOMER"/>
<dbReference type="Proteomes" id="UP000001014">
    <property type="component" value="Chromosome"/>
</dbReference>
<dbReference type="GO" id="GO:0005829">
    <property type="term" value="C:cytosol"/>
    <property type="evidence" value="ECO:0000318"/>
    <property type="project" value="GO_Central"/>
</dbReference>
<dbReference type="GO" id="GO:0005525">
    <property type="term" value="F:GTP binding"/>
    <property type="evidence" value="ECO:0007669"/>
    <property type="project" value="UniProtKB-UniRule"/>
</dbReference>
<dbReference type="GO" id="GO:0046872">
    <property type="term" value="F:metal ion binding"/>
    <property type="evidence" value="ECO:0007669"/>
    <property type="project" value="UniProtKB-KW"/>
</dbReference>
<dbReference type="GO" id="GO:0000917">
    <property type="term" value="P:division septum assembly"/>
    <property type="evidence" value="ECO:0007669"/>
    <property type="project" value="UniProtKB-KW"/>
</dbReference>
<dbReference type="CDD" id="cd01876">
    <property type="entry name" value="YihA_EngB"/>
    <property type="match status" value="1"/>
</dbReference>
<dbReference type="FunFam" id="3.40.50.300:FF:000098">
    <property type="entry name" value="Probable GTP-binding protein EngB"/>
    <property type="match status" value="1"/>
</dbReference>
<dbReference type="Gene3D" id="3.40.50.300">
    <property type="entry name" value="P-loop containing nucleotide triphosphate hydrolases"/>
    <property type="match status" value="1"/>
</dbReference>
<dbReference type="HAMAP" id="MF_00321">
    <property type="entry name" value="GTPase_EngB"/>
    <property type="match status" value="1"/>
</dbReference>
<dbReference type="InterPro" id="IPR030393">
    <property type="entry name" value="G_ENGB_dom"/>
</dbReference>
<dbReference type="InterPro" id="IPR006073">
    <property type="entry name" value="GTP-bd"/>
</dbReference>
<dbReference type="InterPro" id="IPR019987">
    <property type="entry name" value="GTP-bd_ribosome_bio_YsxC"/>
</dbReference>
<dbReference type="InterPro" id="IPR027417">
    <property type="entry name" value="P-loop_NTPase"/>
</dbReference>
<dbReference type="NCBIfam" id="TIGR03598">
    <property type="entry name" value="GTPase_YsxC"/>
    <property type="match status" value="1"/>
</dbReference>
<dbReference type="PANTHER" id="PTHR11649:SF13">
    <property type="entry name" value="ENGB-TYPE G DOMAIN-CONTAINING PROTEIN"/>
    <property type="match status" value="1"/>
</dbReference>
<dbReference type="PANTHER" id="PTHR11649">
    <property type="entry name" value="MSS1/TRME-RELATED GTP-BINDING PROTEIN"/>
    <property type="match status" value="1"/>
</dbReference>
<dbReference type="Pfam" id="PF01926">
    <property type="entry name" value="MMR_HSR1"/>
    <property type="match status" value="1"/>
</dbReference>
<dbReference type="SUPFAM" id="SSF52540">
    <property type="entry name" value="P-loop containing nucleoside triphosphate hydrolases"/>
    <property type="match status" value="1"/>
</dbReference>
<dbReference type="PROSITE" id="PS51706">
    <property type="entry name" value="G_ENGB"/>
    <property type="match status" value="1"/>
</dbReference>
<reference key="1">
    <citation type="journal article" date="2001" name="Nature">
        <title>Complete genome sequence of Salmonella enterica serovar Typhimurium LT2.</title>
        <authorList>
            <person name="McClelland M."/>
            <person name="Sanderson K.E."/>
            <person name="Spieth J."/>
            <person name="Clifton S.W."/>
            <person name="Latreille P."/>
            <person name="Courtney L."/>
            <person name="Porwollik S."/>
            <person name="Ali J."/>
            <person name="Dante M."/>
            <person name="Du F."/>
            <person name="Hou S."/>
            <person name="Layman D."/>
            <person name="Leonard S."/>
            <person name="Nguyen C."/>
            <person name="Scott K."/>
            <person name="Holmes A."/>
            <person name="Grewal N."/>
            <person name="Mulvaney E."/>
            <person name="Ryan E."/>
            <person name="Sun H."/>
            <person name="Florea L."/>
            <person name="Miller W."/>
            <person name="Stoneking T."/>
            <person name="Nhan M."/>
            <person name="Waterston R."/>
            <person name="Wilson R.K."/>
        </authorList>
    </citation>
    <scope>NUCLEOTIDE SEQUENCE [LARGE SCALE GENOMIC DNA]</scope>
    <source>
        <strain>LT2 / SGSC1412 / ATCC 700720</strain>
    </source>
</reference>
<proteinExistence type="inferred from homology"/>
<comment type="function">
    <text evidence="1">Necessary for normal cell division and for the maintenance of normal septation.</text>
</comment>
<comment type="cofactor">
    <cofactor evidence="1">
        <name>Mg(2+)</name>
        <dbReference type="ChEBI" id="CHEBI:18420"/>
    </cofactor>
</comment>
<comment type="similarity">
    <text evidence="1">Belongs to the TRAFAC class TrmE-Era-EngA-EngB-Septin-like GTPase superfamily. EngB GTPase family.</text>
</comment>
<protein>
    <recommendedName>
        <fullName evidence="1">Probable GTP-binding protein EngB</fullName>
    </recommendedName>
</protein>
<organism>
    <name type="scientific">Salmonella typhimurium (strain LT2 / SGSC1412 / ATCC 700720)</name>
    <dbReference type="NCBI Taxonomy" id="99287"/>
    <lineage>
        <taxon>Bacteria</taxon>
        <taxon>Pseudomonadati</taxon>
        <taxon>Pseudomonadota</taxon>
        <taxon>Gammaproteobacteria</taxon>
        <taxon>Enterobacterales</taxon>
        <taxon>Enterobacteriaceae</taxon>
        <taxon>Salmonella</taxon>
    </lineage>
</organism>
<name>ENGB_SALTY</name>
<feature type="chain" id="PRO_0000157778" description="Probable GTP-binding protein EngB">
    <location>
        <begin position="1"/>
        <end position="210"/>
    </location>
</feature>
<feature type="domain" description="EngB-type G" evidence="1">
    <location>
        <begin position="25"/>
        <end position="199"/>
    </location>
</feature>
<feature type="binding site" evidence="1">
    <location>
        <begin position="33"/>
        <end position="40"/>
    </location>
    <ligand>
        <name>GTP</name>
        <dbReference type="ChEBI" id="CHEBI:37565"/>
    </ligand>
</feature>
<feature type="binding site" evidence="1">
    <location>
        <position position="40"/>
    </location>
    <ligand>
        <name>Mg(2+)</name>
        <dbReference type="ChEBI" id="CHEBI:18420"/>
    </ligand>
</feature>
<feature type="binding site" evidence="1">
    <location>
        <begin position="60"/>
        <end position="64"/>
    </location>
    <ligand>
        <name>GTP</name>
        <dbReference type="ChEBI" id="CHEBI:37565"/>
    </ligand>
</feature>
<feature type="binding site" evidence="1">
    <location>
        <position position="62"/>
    </location>
    <ligand>
        <name>Mg(2+)</name>
        <dbReference type="ChEBI" id="CHEBI:18420"/>
    </ligand>
</feature>
<feature type="binding site" evidence="1">
    <location>
        <begin position="78"/>
        <end position="81"/>
    </location>
    <ligand>
        <name>GTP</name>
        <dbReference type="ChEBI" id="CHEBI:37565"/>
    </ligand>
</feature>
<feature type="binding site" evidence="1">
    <location>
        <begin position="145"/>
        <end position="148"/>
    </location>
    <ligand>
        <name>GTP</name>
        <dbReference type="ChEBI" id="CHEBI:37565"/>
    </ligand>
</feature>
<feature type="binding site" evidence="1">
    <location>
        <begin position="178"/>
        <end position="180"/>
    </location>
    <ligand>
        <name>GTP</name>
        <dbReference type="ChEBI" id="CHEBI:37565"/>
    </ligand>
</feature>
<evidence type="ECO:0000255" key="1">
    <source>
        <dbReference type="HAMAP-Rule" id="MF_00321"/>
    </source>
</evidence>
<gene>
    <name evidence="1" type="primary">engB</name>
    <name type="ordered locus">STM4001</name>
</gene>